<organism>
    <name type="scientific">Myxococcus xanthus</name>
    <dbReference type="NCBI Taxonomy" id="34"/>
    <lineage>
        <taxon>Bacteria</taxon>
        <taxon>Pseudomonadati</taxon>
        <taxon>Myxococcota</taxon>
        <taxon>Myxococcia</taxon>
        <taxon>Myxococcales</taxon>
        <taxon>Cystobacterineae</taxon>
        <taxon>Myxococcaceae</taxon>
        <taxon>Myxococcus</taxon>
    </lineage>
</organism>
<reference key="1">
    <citation type="submission" date="2002-12" db="EMBL/GenBank/DDBJ databases">
        <title>Identification of genes required for adventurous gliding motility in Myxococcus xanthus with the transposable element mariner.</title>
        <authorList>
            <person name="Hartzell P.L."/>
            <person name="Youderian P.A."/>
        </authorList>
    </citation>
    <scope>NUCLEOTIDE SEQUENCE [GENOMIC DNA]</scope>
</reference>
<gene>
    <name evidence="1" type="primary">metK</name>
</gene>
<accession>Q84FD3</accession>
<keyword id="KW-0067">ATP-binding</keyword>
<keyword id="KW-0963">Cytoplasm</keyword>
<keyword id="KW-0460">Magnesium</keyword>
<keyword id="KW-0479">Metal-binding</keyword>
<keyword id="KW-0547">Nucleotide-binding</keyword>
<keyword id="KW-0554">One-carbon metabolism</keyword>
<keyword id="KW-0630">Potassium</keyword>
<keyword id="KW-0808">Transferase</keyword>
<evidence type="ECO:0000255" key="1">
    <source>
        <dbReference type="HAMAP-Rule" id="MF_00086"/>
    </source>
</evidence>
<proteinExistence type="inferred from homology"/>
<sequence>MPTDFLFTSESVTEGHPDKIADQISDGVLDAIIAKDPQARVAVETLVKTGLAIVAGEVTTNCYVDIPKLVRSTICRIGYTDSSMGYDGNTCGVMVAIEGQSQDIARGVDNKKDQGAGDQGMMFGFACDETPELMPAPIHYAHAITRRLADVRRKQHPWIRPDGKSQVTVEYRDGRPARIDAVVVSTQHSDEVSNKKIQEAIREDVIANALPKKLIDNKTKFFINPTGRLVAGGPMGDSGLTGRKIIVDTYGGMGRHGGGAFSGKDPSKVDRSAAYMGRHIAKTVVAAGLARRCEVQVSYAIGVAEPVSVMVETFGTATVPEERIALAVRKTFGLRPREITEYLNLLRPIYQKTAAYGHFGRTEKEFTWERVEEKKDALRDAAKSATPSGGRRLKAV</sequence>
<feature type="chain" id="PRO_0000174558" description="S-adenosylmethionine synthase">
    <location>
        <begin position="1"/>
        <end position="396"/>
    </location>
</feature>
<feature type="region of interest" description="Flexible loop" evidence="1">
    <location>
        <begin position="100"/>
        <end position="110"/>
    </location>
</feature>
<feature type="binding site" description="in other chain" evidence="1">
    <location>
        <position position="16"/>
    </location>
    <ligand>
        <name>ATP</name>
        <dbReference type="ChEBI" id="CHEBI:30616"/>
        <note>ligand shared between two neighboring subunits</note>
    </ligand>
</feature>
<feature type="binding site" evidence="1">
    <location>
        <position position="18"/>
    </location>
    <ligand>
        <name>Mg(2+)</name>
        <dbReference type="ChEBI" id="CHEBI:18420"/>
    </ligand>
</feature>
<feature type="binding site" evidence="1">
    <location>
        <position position="44"/>
    </location>
    <ligand>
        <name>K(+)</name>
        <dbReference type="ChEBI" id="CHEBI:29103"/>
    </ligand>
</feature>
<feature type="binding site" description="in other chain" evidence="1">
    <location>
        <position position="57"/>
    </location>
    <ligand>
        <name>L-methionine</name>
        <dbReference type="ChEBI" id="CHEBI:57844"/>
        <note>ligand shared between two neighboring subunits</note>
    </ligand>
</feature>
<feature type="binding site" description="in other chain" evidence="1">
    <location>
        <position position="100"/>
    </location>
    <ligand>
        <name>L-methionine</name>
        <dbReference type="ChEBI" id="CHEBI:57844"/>
        <note>ligand shared between two neighboring subunits</note>
    </ligand>
</feature>
<feature type="binding site" description="in other chain" evidence="1">
    <location>
        <begin position="162"/>
        <end position="164"/>
    </location>
    <ligand>
        <name>ATP</name>
        <dbReference type="ChEBI" id="CHEBI:30616"/>
        <note>ligand shared between two neighboring subunits</note>
    </ligand>
</feature>
<feature type="binding site" evidence="1">
    <location>
        <position position="237"/>
    </location>
    <ligand>
        <name>ATP</name>
        <dbReference type="ChEBI" id="CHEBI:30616"/>
        <note>ligand shared between two neighboring subunits</note>
    </ligand>
</feature>
<feature type="binding site" evidence="1">
    <location>
        <position position="237"/>
    </location>
    <ligand>
        <name>L-methionine</name>
        <dbReference type="ChEBI" id="CHEBI:57844"/>
        <note>ligand shared between two neighboring subunits</note>
    </ligand>
</feature>
<feature type="binding site" description="in other chain" evidence="1">
    <location>
        <begin position="243"/>
        <end position="244"/>
    </location>
    <ligand>
        <name>ATP</name>
        <dbReference type="ChEBI" id="CHEBI:30616"/>
        <note>ligand shared between two neighboring subunits</note>
    </ligand>
</feature>
<feature type="binding site" evidence="1">
    <location>
        <position position="260"/>
    </location>
    <ligand>
        <name>ATP</name>
        <dbReference type="ChEBI" id="CHEBI:30616"/>
        <note>ligand shared between two neighboring subunits</note>
    </ligand>
</feature>
<feature type="binding site" evidence="1">
    <location>
        <position position="264"/>
    </location>
    <ligand>
        <name>ATP</name>
        <dbReference type="ChEBI" id="CHEBI:30616"/>
        <note>ligand shared between two neighboring subunits</note>
    </ligand>
</feature>
<feature type="binding site" description="in other chain" evidence="1">
    <location>
        <position position="268"/>
    </location>
    <ligand>
        <name>L-methionine</name>
        <dbReference type="ChEBI" id="CHEBI:57844"/>
        <note>ligand shared between two neighboring subunits</note>
    </ligand>
</feature>
<dbReference type="EC" id="2.5.1.6" evidence="1"/>
<dbReference type="EMBL" id="AY204466">
    <property type="protein sequence ID" value="AAO22881.1"/>
    <property type="molecule type" value="Genomic_DNA"/>
</dbReference>
<dbReference type="SMR" id="Q84FD3"/>
<dbReference type="UniPathway" id="UPA00315">
    <property type="reaction ID" value="UER00080"/>
</dbReference>
<dbReference type="GO" id="GO:0005737">
    <property type="term" value="C:cytoplasm"/>
    <property type="evidence" value="ECO:0007669"/>
    <property type="project" value="UniProtKB-SubCell"/>
</dbReference>
<dbReference type="GO" id="GO:0005524">
    <property type="term" value="F:ATP binding"/>
    <property type="evidence" value="ECO:0007669"/>
    <property type="project" value="UniProtKB-UniRule"/>
</dbReference>
<dbReference type="GO" id="GO:0000287">
    <property type="term" value="F:magnesium ion binding"/>
    <property type="evidence" value="ECO:0007669"/>
    <property type="project" value="UniProtKB-UniRule"/>
</dbReference>
<dbReference type="GO" id="GO:0004478">
    <property type="term" value="F:methionine adenosyltransferase activity"/>
    <property type="evidence" value="ECO:0007669"/>
    <property type="project" value="UniProtKB-UniRule"/>
</dbReference>
<dbReference type="GO" id="GO:0006730">
    <property type="term" value="P:one-carbon metabolic process"/>
    <property type="evidence" value="ECO:0007669"/>
    <property type="project" value="UniProtKB-KW"/>
</dbReference>
<dbReference type="GO" id="GO:0006556">
    <property type="term" value="P:S-adenosylmethionine biosynthetic process"/>
    <property type="evidence" value="ECO:0007669"/>
    <property type="project" value="UniProtKB-UniRule"/>
</dbReference>
<dbReference type="CDD" id="cd18079">
    <property type="entry name" value="S-AdoMet_synt"/>
    <property type="match status" value="1"/>
</dbReference>
<dbReference type="FunFam" id="3.30.300.10:FF:000003">
    <property type="entry name" value="S-adenosylmethionine synthase"/>
    <property type="match status" value="1"/>
</dbReference>
<dbReference type="FunFam" id="3.30.300.10:FF:000004">
    <property type="entry name" value="S-adenosylmethionine synthase"/>
    <property type="match status" value="1"/>
</dbReference>
<dbReference type="Gene3D" id="3.30.300.10">
    <property type="match status" value="3"/>
</dbReference>
<dbReference type="HAMAP" id="MF_00086">
    <property type="entry name" value="S_AdoMet_synth1"/>
    <property type="match status" value="1"/>
</dbReference>
<dbReference type="InterPro" id="IPR022631">
    <property type="entry name" value="ADOMET_SYNTHASE_CS"/>
</dbReference>
<dbReference type="InterPro" id="IPR022630">
    <property type="entry name" value="S-AdoMet_synt_C"/>
</dbReference>
<dbReference type="InterPro" id="IPR022629">
    <property type="entry name" value="S-AdoMet_synt_central"/>
</dbReference>
<dbReference type="InterPro" id="IPR022628">
    <property type="entry name" value="S-AdoMet_synt_N"/>
</dbReference>
<dbReference type="InterPro" id="IPR002133">
    <property type="entry name" value="S-AdoMet_synthetase"/>
</dbReference>
<dbReference type="InterPro" id="IPR022636">
    <property type="entry name" value="S-AdoMet_synthetase_sfam"/>
</dbReference>
<dbReference type="NCBIfam" id="TIGR01034">
    <property type="entry name" value="metK"/>
    <property type="match status" value="1"/>
</dbReference>
<dbReference type="PANTHER" id="PTHR11964">
    <property type="entry name" value="S-ADENOSYLMETHIONINE SYNTHETASE"/>
    <property type="match status" value="1"/>
</dbReference>
<dbReference type="Pfam" id="PF02773">
    <property type="entry name" value="S-AdoMet_synt_C"/>
    <property type="match status" value="1"/>
</dbReference>
<dbReference type="Pfam" id="PF02772">
    <property type="entry name" value="S-AdoMet_synt_M"/>
    <property type="match status" value="1"/>
</dbReference>
<dbReference type="Pfam" id="PF00438">
    <property type="entry name" value="S-AdoMet_synt_N"/>
    <property type="match status" value="1"/>
</dbReference>
<dbReference type="PIRSF" id="PIRSF000497">
    <property type="entry name" value="MAT"/>
    <property type="match status" value="1"/>
</dbReference>
<dbReference type="SUPFAM" id="SSF55973">
    <property type="entry name" value="S-adenosylmethionine synthetase"/>
    <property type="match status" value="3"/>
</dbReference>
<dbReference type="PROSITE" id="PS00376">
    <property type="entry name" value="ADOMET_SYNTHASE_1"/>
    <property type="match status" value="1"/>
</dbReference>
<dbReference type="PROSITE" id="PS00377">
    <property type="entry name" value="ADOMET_SYNTHASE_2"/>
    <property type="match status" value="1"/>
</dbReference>
<name>METK_MYXXA</name>
<protein>
    <recommendedName>
        <fullName evidence="1">S-adenosylmethionine synthase</fullName>
        <shortName evidence="1">AdoMet synthase</shortName>
        <ecNumber evidence="1">2.5.1.6</ecNumber>
    </recommendedName>
    <alternativeName>
        <fullName evidence="1">MAT</fullName>
    </alternativeName>
    <alternativeName>
        <fullName evidence="1">Methionine adenosyltransferase</fullName>
    </alternativeName>
</protein>
<comment type="function">
    <text evidence="1">Catalyzes the formation of S-adenosylmethionine (AdoMet) from methionine and ATP. The overall synthetic reaction is composed of two sequential steps, AdoMet formation and the subsequent tripolyphosphate hydrolysis which occurs prior to release of AdoMet from the enzyme.</text>
</comment>
<comment type="catalytic activity">
    <reaction evidence="1">
        <text>L-methionine + ATP + H2O = S-adenosyl-L-methionine + phosphate + diphosphate</text>
        <dbReference type="Rhea" id="RHEA:21080"/>
        <dbReference type="ChEBI" id="CHEBI:15377"/>
        <dbReference type="ChEBI" id="CHEBI:30616"/>
        <dbReference type="ChEBI" id="CHEBI:33019"/>
        <dbReference type="ChEBI" id="CHEBI:43474"/>
        <dbReference type="ChEBI" id="CHEBI:57844"/>
        <dbReference type="ChEBI" id="CHEBI:59789"/>
        <dbReference type="EC" id="2.5.1.6"/>
    </reaction>
</comment>
<comment type="cofactor">
    <cofactor evidence="1">
        <name>Mg(2+)</name>
        <dbReference type="ChEBI" id="CHEBI:18420"/>
    </cofactor>
    <text evidence="1">Binds 2 divalent ions per subunit.</text>
</comment>
<comment type="cofactor">
    <cofactor evidence="1">
        <name>K(+)</name>
        <dbReference type="ChEBI" id="CHEBI:29103"/>
    </cofactor>
    <text evidence="1">Binds 1 potassium ion per subunit.</text>
</comment>
<comment type="pathway">
    <text evidence="1">Amino-acid biosynthesis; S-adenosyl-L-methionine biosynthesis; S-adenosyl-L-methionine from L-methionine: step 1/1.</text>
</comment>
<comment type="subunit">
    <text evidence="1">Homotetramer; dimer of dimers.</text>
</comment>
<comment type="subcellular location">
    <subcellularLocation>
        <location evidence="1">Cytoplasm</location>
    </subcellularLocation>
</comment>
<comment type="similarity">
    <text evidence="1">Belongs to the AdoMet synthase family.</text>
</comment>